<feature type="initiator methionine" description="Removed" evidence="2">
    <location>
        <position position="1"/>
    </location>
</feature>
<feature type="chain" id="PRO_0000090961" description="Elongation factor 1-alpha">
    <location>
        <begin position="2"/>
        <end position="461"/>
    </location>
</feature>
<feature type="domain" description="tr-type G">
    <location>
        <begin position="6"/>
        <end position="241"/>
    </location>
</feature>
<feature type="region of interest" description="G1" evidence="1">
    <location>
        <begin position="15"/>
        <end position="22"/>
    </location>
</feature>
<feature type="region of interest" description="G2" evidence="1">
    <location>
        <begin position="71"/>
        <end position="75"/>
    </location>
</feature>
<feature type="region of interest" description="G3" evidence="1">
    <location>
        <begin position="92"/>
        <end position="95"/>
    </location>
</feature>
<feature type="region of interest" description="G4" evidence="1">
    <location>
        <begin position="154"/>
        <end position="157"/>
    </location>
</feature>
<feature type="region of interest" description="G5" evidence="1">
    <location>
        <begin position="193"/>
        <end position="195"/>
    </location>
</feature>
<feature type="binding site" evidence="1">
    <location>
        <begin position="15"/>
        <end position="22"/>
    </location>
    <ligand>
        <name>GTP</name>
        <dbReference type="ChEBI" id="CHEBI:37565"/>
    </ligand>
</feature>
<feature type="binding site" evidence="1">
    <location>
        <begin position="92"/>
        <end position="96"/>
    </location>
    <ligand>
        <name>GTP</name>
        <dbReference type="ChEBI" id="CHEBI:37565"/>
    </ligand>
</feature>
<feature type="binding site" evidence="1">
    <location>
        <begin position="154"/>
        <end position="157"/>
    </location>
    <ligand>
        <name>GTP</name>
        <dbReference type="ChEBI" id="CHEBI:37565"/>
    </ligand>
</feature>
<feature type="modified residue" description="N,N,N-trimethylglycine" evidence="2">
    <location>
        <position position="2"/>
    </location>
</feature>
<feature type="modified residue" description="N6,N6-dimethyllysine; alternate" evidence="2">
    <location>
        <position position="3"/>
    </location>
</feature>
<feature type="modified residue" description="N6-methyllysine; alternate" evidence="2">
    <location>
        <position position="3"/>
    </location>
</feature>
<feature type="modified residue" description="N6-methyllysine" evidence="2">
    <location>
        <position position="31"/>
    </location>
</feature>
<feature type="modified residue" description="N6,N6,N6-trimethyllysine" evidence="2">
    <location>
        <position position="80"/>
    </location>
</feature>
<feature type="modified residue" description="N6,N6-dimethyllysine; alternate" evidence="2">
    <location>
        <position position="317"/>
    </location>
</feature>
<feature type="modified residue" description="N6-methyllysine; alternate" evidence="2">
    <location>
        <position position="317"/>
    </location>
</feature>
<feature type="modified residue" description="N6-methyllysine" evidence="2">
    <location>
        <position position="391"/>
    </location>
</feature>
<accession>Q01765</accession>
<protein>
    <recommendedName>
        <fullName>Elongation factor 1-alpha</fullName>
        <shortName>EF-1-alpha</shortName>
    </recommendedName>
</protein>
<comment type="function">
    <text>This protein promotes the GTP-dependent binding of aminoacyl-tRNA to the A-site of ribosomes during protein biosynthesis.</text>
</comment>
<comment type="subcellular location">
    <subcellularLocation>
        <location>Cytoplasm</location>
    </subcellularLocation>
</comment>
<comment type="similarity">
    <text evidence="3">Belongs to the TRAFAC class translation factor GTPase superfamily. Classic translation factor GTPase family. EF-Tu/EF-1A subfamily.</text>
</comment>
<name>EF1A_PSECR</name>
<reference key="1">
    <citation type="journal article" date="1997" name="Fungal Genet. Biol.">
        <title>Cloning, sequencing, and transgenic expression of Podospora curvicolla and Sordaria macrospora eEF1A genes: relationship between cytosolic translation and longevity in filamentous fungi.</title>
        <authorList>
            <person name="Gagny B."/>
            <person name="Rossignol M."/>
            <person name="Silar P."/>
        </authorList>
    </citation>
    <scope>NUCLEOTIDE SEQUENCE [GENOMIC DNA]</scope>
    <source>
        <strain>VLV</strain>
    </source>
</reference>
<sequence length="461" mass="49905">MGKEDKTHINVVVIGHVDSGKSTTTGHLIYKCGGIDKRTIEKFEKEAAELGKGSFKYAWVLDKLKAERERGITIDIALWKFETPKYYVTVIDAPGHRDFIKNMITGTSQADCAILIIAAGTGEFEAGISKDGQTREHALLAYTLGVKQLIVAINKMDTTKWSEARFNEIIKETSNFIKKVGYNPKTVAFVPISGFNGDNMLEASTNCPWYKGWEKEVKGGKATGKTLLEAIDSIEPPKRPTDKPLRLPLQDVYKIGGIGTVPVGRIETGILKPGMVVTFAPSNVTTEVKSVEMHHEQLSEGVPGDNVGFNVKNVSVKEIRRGNVAGDSKNDPPLGAASFDAQVIVLNHPGQVGAGYAPVLDCHTAHIACKFAELLQKIDRRTGKAVEESPKFIKSGDAAIVKMIPSKPMCVEAFTEYPPLGRFAVRDMRQTVAVGVIKKVEKAAAGSGKVTKSAAKAGGKK</sequence>
<evidence type="ECO:0000250" key="1"/>
<evidence type="ECO:0000250" key="2">
    <source>
        <dbReference type="UniProtKB" id="P02994"/>
    </source>
</evidence>
<evidence type="ECO:0000305" key="3"/>
<dbReference type="EMBL" id="X96614">
    <property type="protein sequence ID" value="CAA65434.1"/>
    <property type="molecule type" value="Genomic_DNA"/>
</dbReference>
<dbReference type="SMR" id="Q01765"/>
<dbReference type="GO" id="GO:0005737">
    <property type="term" value="C:cytoplasm"/>
    <property type="evidence" value="ECO:0007669"/>
    <property type="project" value="UniProtKB-SubCell"/>
</dbReference>
<dbReference type="GO" id="GO:0005525">
    <property type="term" value="F:GTP binding"/>
    <property type="evidence" value="ECO:0007669"/>
    <property type="project" value="UniProtKB-KW"/>
</dbReference>
<dbReference type="GO" id="GO:0003924">
    <property type="term" value="F:GTPase activity"/>
    <property type="evidence" value="ECO:0007669"/>
    <property type="project" value="InterPro"/>
</dbReference>
<dbReference type="GO" id="GO:0003746">
    <property type="term" value="F:translation elongation factor activity"/>
    <property type="evidence" value="ECO:0007669"/>
    <property type="project" value="UniProtKB-KW"/>
</dbReference>
<dbReference type="CDD" id="cd01883">
    <property type="entry name" value="EF1_alpha"/>
    <property type="match status" value="1"/>
</dbReference>
<dbReference type="CDD" id="cd03693">
    <property type="entry name" value="EF1_alpha_II"/>
    <property type="match status" value="1"/>
</dbReference>
<dbReference type="CDD" id="cd03705">
    <property type="entry name" value="EF1_alpha_III"/>
    <property type="match status" value="1"/>
</dbReference>
<dbReference type="FunFam" id="2.40.30.10:FF:000003">
    <property type="entry name" value="Elongation factor 1-alpha"/>
    <property type="match status" value="1"/>
</dbReference>
<dbReference type="FunFam" id="2.40.30.10:FF:000005">
    <property type="entry name" value="Elongation factor 1-alpha"/>
    <property type="match status" value="1"/>
</dbReference>
<dbReference type="FunFam" id="3.40.50.300:FF:000211">
    <property type="entry name" value="Elongation factor 1-alpha"/>
    <property type="match status" value="1"/>
</dbReference>
<dbReference type="Gene3D" id="3.40.50.300">
    <property type="entry name" value="P-loop containing nucleotide triphosphate hydrolases"/>
    <property type="match status" value="1"/>
</dbReference>
<dbReference type="Gene3D" id="2.40.30.10">
    <property type="entry name" value="Translation factors"/>
    <property type="match status" value="2"/>
</dbReference>
<dbReference type="HAMAP" id="MF_00118_A">
    <property type="entry name" value="EF_Tu_A"/>
    <property type="match status" value="1"/>
</dbReference>
<dbReference type="InterPro" id="IPR004161">
    <property type="entry name" value="EFTu-like_2"/>
</dbReference>
<dbReference type="InterPro" id="IPR031157">
    <property type="entry name" value="G_TR_CS"/>
</dbReference>
<dbReference type="InterPro" id="IPR054696">
    <property type="entry name" value="GTP-eEF1A_C"/>
</dbReference>
<dbReference type="InterPro" id="IPR027417">
    <property type="entry name" value="P-loop_NTPase"/>
</dbReference>
<dbReference type="InterPro" id="IPR000795">
    <property type="entry name" value="T_Tr_GTP-bd_dom"/>
</dbReference>
<dbReference type="InterPro" id="IPR050100">
    <property type="entry name" value="TRAFAC_GTPase_members"/>
</dbReference>
<dbReference type="InterPro" id="IPR009000">
    <property type="entry name" value="Transl_B-barrel_sf"/>
</dbReference>
<dbReference type="InterPro" id="IPR009001">
    <property type="entry name" value="Transl_elong_EF1A/Init_IF2_C"/>
</dbReference>
<dbReference type="InterPro" id="IPR004539">
    <property type="entry name" value="Transl_elong_EF1A_euk/arc"/>
</dbReference>
<dbReference type="NCBIfam" id="TIGR00483">
    <property type="entry name" value="EF-1_alpha"/>
    <property type="match status" value="1"/>
</dbReference>
<dbReference type="NCBIfam" id="NF008969">
    <property type="entry name" value="PRK12317.1"/>
    <property type="match status" value="1"/>
</dbReference>
<dbReference type="PANTHER" id="PTHR23115">
    <property type="entry name" value="TRANSLATION FACTOR"/>
    <property type="match status" value="1"/>
</dbReference>
<dbReference type="Pfam" id="PF22594">
    <property type="entry name" value="GTP-eEF1A_C"/>
    <property type="match status" value="1"/>
</dbReference>
<dbReference type="Pfam" id="PF00009">
    <property type="entry name" value="GTP_EFTU"/>
    <property type="match status" value="1"/>
</dbReference>
<dbReference type="Pfam" id="PF03144">
    <property type="entry name" value="GTP_EFTU_D2"/>
    <property type="match status" value="1"/>
</dbReference>
<dbReference type="PRINTS" id="PR00315">
    <property type="entry name" value="ELONGATNFCT"/>
</dbReference>
<dbReference type="SUPFAM" id="SSF50465">
    <property type="entry name" value="EF-Tu/eEF-1alpha/eIF2-gamma C-terminal domain"/>
    <property type="match status" value="1"/>
</dbReference>
<dbReference type="SUPFAM" id="SSF52540">
    <property type="entry name" value="P-loop containing nucleoside triphosphate hydrolases"/>
    <property type="match status" value="1"/>
</dbReference>
<dbReference type="SUPFAM" id="SSF50447">
    <property type="entry name" value="Translation proteins"/>
    <property type="match status" value="1"/>
</dbReference>
<dbReference type="PROSITE" id="PS00301">
    <property type="entry name" value="G_TR_1"/>
    <property type="match status" value="1"/>
</dbReference>
<dbReference type="PROSITE" id="PS51722">
    <property type="entry name" value="G_TR_2"/>
    <property type="match status" value="1"/>
</dbReference>
<proteinExistence type="inferred from homology"/>
<keyword id="KW-0963">Cytoplasm</keyword>
<keyword id="KW-0251">Elongation factor</keyword>
<keyword id="KW-0342">GTP-binding</keyword>
<keyword id="KW-0488">Methylation</keyword>
<keyword id="KW-0547">Nucleotide-binding</keyword>
<keyword id="KW-0648">Protein biosynthesis</keyword>
<gene>
    <name type="primary">TEF</name>
</gene>
<organism>
    <name type="scientific">Pseudoechria curvicolla</name>
    <name type="common">Podospora curvicolla</name>
    <dbReference type="NCBI Taxonomy" id="48157"/>
    <lineage>
        <taxon>Eukaryota</taxon>
        <taxon>Fungi</taxon>
        <taxon>Dikarya</taxon>
        <taxon>Ascomycota</taxon>
        <taxon>Pezizomycotina</taxon>
        <taxon>Sordariomycetes</taxon>
        <taxon>Sordariomycetidae</taxon>
        <taxon>Sordariales</taxon>
        <taxon>Schizotheciaceae</taxon>
        <taxon>Pseudoechria</taxon>
    </lineage>
</organism>